<sequence length="317" mass="35816">MSFSARSRRQRLQLEEAYQREMIFKMHTLDLVREGVNKRSPAFVRAFTSAKEASLDLDRYMQAHSRVGRVEQNARALAQRVEAQAAVGEILDRHRRFLHPDFIDNFDSREDSIVEREERLGDVLSDINCDGGGGEVGDPQEWLGHEDEALLMRWMLEEAPRVSTRIAADPHSPRSTCPAPRKAPEDARCGARKPGEVNNYTPSAQPRSQETTVDHLASPDEGTRLGDRTRDLEHHSTAPMRTHPNVLASERRRLGVVHQREKSSESQESATRSKAIVGQEDQKWLGGIPPLSDEELQVDMGIPTMNGPIYPDYHRTA</sequence>
<dbReference type="EMBL" id="AY665713">
    <property type="protein sequence ID" value="AAT67305.1"/>
    <property type="molecule type" value="Genomic_DNA"/>
</dbReference>
<dbReference type="PIR" id="C36800">
    <property type="entry name" value="WZBEE1"/>
</dbReference>
<dbReference type="SMR" id="P28949"/>
<dbReference type="KEGG" id="vg:1487539"/>
<dbReference type="Proteomes" id="UP000001189">
    <property type="component" value="Segment"/>
</dbReference>
<dbReference type="GO" id="GO:0030430">
    <property type="term" value="C:host cell cytoplasm"/>
    <property type="evidence" value="ECO:0007669"/>
    <property type="project" value="UniProtKB-SubCell"/>
</dbReference>
<dbReference type="GO" id="GO:0042025">
    <property type="term" value="C:host cell nucleus"/>
    <property type="evidence" value="ECO:0007669"/>
    <property type="project" value="UniProtKB-SubCell"/>
</dbReference>
<dbReference type="GO" id="GO:0019033">
    <property type="term" value="C:viral tegument"/>
    <property type="evidence" value="ECO:0007669"/>
    <property type="project" value="UniProtKB-SubCell"/>
</dbReference>
<dbReference type="InterPro" id="IPR005207">
    <property type="entry name" value="Herpes_UL14"/>
</dbReference>
<dbReference type="Pfam" id="PF03580">
    <property type="entry name" value="Herpes_UL14"/>
    <property type="match status" value="1"/>
</dbReference>
<keyword id="KW-1035">Host cytoplasm</keyword>
<keyword id="KW-1048">Host nucleus</keyword>
<keyword id="KW-1185">Reference proteome</keyword>
<keyword id="KW-0946">Virion</keyword>
<keyword id="KW-0920">Virion tegument</keyword>
<organismHost>
    <name type="scientific">Equus caballus</name>
    <name type="common">Horse</name>
    <dbReference type="NCBI Taxonomy" id="9796"/>
</organismHost>
<protein>
    <recommendedName>
        <fullName>Tegument protein UL14 homolog</fullName>
    </recommendedName>
</protein>
<accession>P28949</accession>
<accession>Q6S6S4</accession>
<comment type="function">
    <text evidence="1">Contributes to the nuclear transport of the viral transcriptional activator VP16 during the early phase of infection. Therefore, participates indirectly in the regulation of the immediate-early gene expression. Additionally, seems to be important for efficient nuclear targeting of capsids (By similarity).</text>
</comment>
<comment type="subcellular location">
    <subcellularLocation>
        <location evidence="1">Virion tegument</location>
    </subcellularLocation>
    <subcellularLocation>
        <location evidence="1">Host cytoplasm</location>
    </subcellularLocation>
    <subcellularLocation>
        <location evidence="1">Host nucleus</location>
    </subcellularLocation>
</comment>
<comment type="similarity">
    <text evidence="3">Belongs to the alphaherpesvirinae HHV-1 UL14 protein family.</text>
</comment>
<evidence type="ECO:0000250" key="1"/>
<evidence type="ECO:0000256" key="2">
    <source>
        <dbReference type="SAM" id="MobiDB-lite"/>
    </source>
</evidence>
<evidence type="ECO:0000305" key="3"/>
<name>TEG3_EHV1B</name>
<feature type="chain" id="PRO_0000115936" description="Tegument protein UL14 homolog">
    <location>
        <begin position="1"/>
        <end position="317"/>
    </location>
</feature>
<feature type="region of interest" description="Disordered" evidence="2">
    <location>
        <begin position="166"/>
        <end position="291"/>
    </location>
</feature>
<feature type="compositionally biased region" description="Basic and acidic residues" evidence="2">
    <location>
        <begin position="182"/>
        <end position="195"/>
    </location>
</feature>
<feature type="compositionally biased region" description="Polar residues" evidence="2">
    <location>
        <begin position="198"/>
        <end position="211"/>
    </location>
</feature>
<feature type="compositionally biased region" description="Basic and acidic residues" evidence="2">
    <location>
        <begin position="217"/>
        <end position="236"/>
    </location>
</feature>
<feature type="compositionally biased region" description="Basic and acidic residues" evidence="2">
    <location>
        <begin position="249"/>
        <end position="265"/>
    </location>
</feature>
<gene>
    <name type="ordered locus">48</name>
</gene>
<organism>
    <name type="scientific">Equine herpesvirus 1 (strain Ab4p)</name>
    <name type="common">EHV-1</name>
    <name type="synonym">Equine abortion virus</name>
    <dbReference type="NCBI Taxonomy" id="31520"/>
    <lineage>
        <taxon>Viruses</taxon>
        <taxon>Duplodnaviria</taxon>
        <taxon>Heunggongvirae</taxon>
        <taxon>Peploviricota</taxon>
        <taxon>Herviviricetes</taxon>
        <taxon>Herpesvirales</taxon>
        <taxon>Orthoherpesviridae</taxon>
        <taxon>Alphaherpesvirinae</taxon>
        <taxon>Varicellovirus</taxon>
        <taxon>Varicellovirus equidalpha1</taxon>
        <taxon>Equid alphaherpesvirus 1</taxon>
    </lineage>
</organism>
<reference key="1">
    <citation type="journal article" date="1992" name="Virology">
        <title>The DNA sequence of equine herpesvirus-1.</title>
        <authorList>
            <person name="Telford E.A.R."/>
            <person name="Watson M.S."/>
            <person name="McBride K."/>
            <person name="Davison A.J."/>
        </authorList>
    </citation>
    <scope>NUCLEOTIDE SEQUENCE [LARGE SCALE GENOMIC DNA]</scope>
</reference>
<proteinExistence type="inferred from homology"/>